<keyword id="KW-1132">Decay of host mRNAs by virus</keyword>
<keyword id="KW-1262">Eukaryotic host gene expression shutoff by virus</keyword>
<keyword id="KW-1035">Host cytoplasm</keyword>
<keyword id="KW-1190">Host gene expression shutoff by virus</keyword>
<keyword id="KW-1192">Host mRNA suppression by virus</keyword>
<keyword id="KW-1048">Host nucleus</keyword>
<keyword id="KW-0945">Host-virus interaction</keyword>
<keyword id="KW-0688">Ribosomal frameshifting</keyword>
<dbReference type="EMBL" id="CY006840">
    <property type="status" value="NOT_ANNOTATED_CDS"/>
    <property type="molecule type" value="Genomic_RNA"/>
</dbReference>
<dbReference type="SMR" id="P0DJT2"/>
<dbReference type="Proteomes" id="UP000007792">
    <property type="component" value="Genome"/>
</dbReference>
<dbReference type="GO" id="GO:0003723">
    <property type="term" value="F:RNA binding"/>
    <property type="evidence" value="ECO:0007669"/>
    <property type="project" value="InterPro"/>
</dbReference>
<dbReference type="GO" id="GO:0039694">
    <property type="term" value="P:viral RNA genome replication"/>
    <property type="evidence" value="ECO:0007669"/>
    <property type="project" value="InterPro"/>
</dbReference>
<dbReference type="GO" id="GO:0075523">
    <property type="term" value="P:viral translational frameshifting"/>
    <property type="evidence" value="ECO:0007669"/>
    <property type="project" value="UniProtKB-KW"/>
</dbReference>
<dbReference type="FunFam" id="3.40.91.90:FF:000001">
    <property type="entry name" value="Polymerase acidic protein"/>
    <property type="match status" value="1"/>
</dbReference>
<dbReference type="Gene3D" id="3.40.91.90">
    <property type="entry name" value="Influenza RNA-dependent RNA polymerase subunit PA, endonuclease domain"/>
    <property type="match status" value="1"/>
</dbReference>
<dbReference type="InterPro" id="IPR001009">
    <property type="entry name" value="PA/PA-X"/>
</dbReference>
<dbReference type="InterPro" id="IPR038372">
    <property type="entry name" value="PA/PA-X_sf"/>
</dbReference>
<dbReference type="Pfam" id="PF00603">
    <property type="entry name" value="Flu_PA"/>
    <property type="match status" value="1"/>
</dbReference>
<accession>P0DJT2</accession>
<sequence length="252" mass="29391">MEDFVRQCFNPMIVELAEKAMKEYGEDLKIETNKFAAICTHLEVCFMYSDFHFINEQGESIVVELDDPNALLKHRFEIIEGRDRTMAWTVVNSICNTTGAEKPKFLPDLYDYKENRFIEIGVTRREVHIYYLEKANKIKSENTHIHIFSFTGEEMATKADYTLDEESRARIKTRLFTIRQEMANRGLWDSFVSPKEAKKQLKKDLKSQELCAGLPTKVSRRTSPALRILEPMWMDSNRTAALRASFLKCPKK</sequence>
<reference key="1">
    <citation type="submission" date="2005-12" db="EMBL/GenBank/DDBJ databases">
        <title>The NIAID influenza genome sequencing project.</title>
        <authorList>
            <person name="Ghedin E."/>
            <person name="Spiro D."/>
            <person name="Miller N."/>
            <person name="Zaborsky J."/>
            <person name="Feldblyum T."/>
            <person name="Subbu V."/>
            <person name="Shumway M."/>
            <person name="Sparenborg J."/>
            <person name="Groveman L."/>
            <person name="Halpin R."/>
            <person name="Sitz J."/>
            <person name="Koo H."/>
            <person name="Salzberg S.L."/>
            <person name="Webster R.G."/>
            <person name="Hoffmann E."/>
            <person name="Krauss S."/>
            <person name="Naeve C."/>
            <person name="Bao Y."/>
            <person name="Bolotov P."/>
            <person name="Dernovoy D."/>
            <person name="Kiryutin B."/>
            <person name="Lipman D.J."/>
            <person name="Tatusova T."/>
        </authorList>
    </citation>
    <scope>NUCLEOTIDE SEQUENCE [GENOMIC RNA]</scope>
</reference>
<protein>
    <recommendedName>
        <fullName>Protein PA-X</fullName>
    </recommendedName>
</protein>
<proteinExistence type="inferred from homology"/>
<comment type="function">
    <text evidence="1 4">Plays a major role in the shutoff of the host protein expression by cleaving mRNAs probably via an endonuclease activity. This host shutoff allows the virus to escape from the host antiviral response (By similarity). Hijacks host RNA splicing machinery to selectively target host RNAs containing introns for destruction. This may explain the preferential degradation of RNAs that have undergone co- or post-transcriptional processing (By similarity).</text>
</comment>
<comment type="subcellular location">
    <subcellularLocation>
        <location evidence="4">Host cytoplasm</location>
    </subcellularLocation>
    <subcellularLocation>
        <location evidence="4">Host nucleus</location>
    </subcellularLocation>
</comment>
<comment type="alternative products">
    <event type="ribosomal frameshifting"/>
    <isoform>
        <id>P0DJT2-1</id>
        <name>PA-X</name>
        <sequence type="displayed"/>
    </isoform>
    <isoform>
        <id>Q2RF99-1</id>
        <name>PA</name>
        <sequence type="external"/>
    </isoform>
</comment>
<comment type="domain">
    <text evidence="1 4">The probable endonuclease active site in the N-terminus and the basic amino acid cluster in the C-terminus are important for the shutoff activity. The C-terminus acts as a nuclear localization signal (By similarity). The C-terminus is recruited to host protein complexes involved in nuclear Pol II RNA processing (By similarity).</text>
</comment>
<comment type="similarity">
    <text evidence="6">Belongs to the influenza viruses PA-X family.</text>
</comment>
<gene>
    <name type="primary">PA</name>
</gene>
<name>PAX_I76A6</name>
<feature type="chain" id="PRO_0000419395" description="Protein PA-X">
    <location>
        <begin position="1"/>
        <end position="252"/>
    </location>
</feature>
<feature type="active site" evidence="2">
    <location>
        <position position="80"/>
    </location>
</feature>
<feature type="active site" evidence="2">
    <location>
        <position position="108"/>
    </location>
</feature>
<feature type="site" description="Important for efficient shutoff activity" evidence="5">
    <location>
        <position position="28"/>
    </location>
</feature>
<feature type="site" description="Important for efficient shutoff activity" evidence="5">
    <location>
        <position position="65"/>
    </location>
</feature>
<feature type="site" description="Important for efficient shutoff activity and nuclear localization" evidence="4">
    <location>
        <position position="195"/>
    </location>
</feature>
<feature type="site" description="Important for efficient shutoff activity and nuclear localization" evidence="4">
    <location>
        <position position="198"/>
    </location>
</feature>
<feature type="site" description="Important for efficient shutoff activity and nuclear localization" evidence="4">
    <location>
        <position position="199"/>
    </location>
</feature>
<feature type="site" description="Important for efficient shutoff activity" evidence="3">
    <location>
        <position position="202"/>
    </location>
</feature>
<feature type="site" description="Important for efficient shutoff activity" evidence="3">
    <location>
        <position position="203"/>
    </location>
</feature>
<feature type="site" description="Important for efficient shutoff activity" evidence="3">
    <location>
        <position position="206"/>
    </location>
</feature>
<organismHost>
    <name type="scientific">Aves</name>
    <dbReference type="NCBI Taxonomy" id="8782"/>
</organismHost>
<organismHost>
    <name type="scientific">Cetacea</name>
    <name type="common">whales</name>
    <dbReference type="NCBI Taxonomy" id="9721"/>
</organismHost>
<organismHost>
    <name type="scientific">Homo sapiens</name>
    <name type="common">Human</name>
    <dbReference type="NCBI Taxonomy" id="9606"/>
</organismHost>
<organismHost>
    <name type="scientific">Phocidae</name>
    <name type="common">true seals</name>
    <dbReference type="NCBI Taxonomy" id="9709"/>
</organismHost>
<organismHost>
    <name type="scientific">Sus scrofa</name>
    <name type="common">Pig</name>
    <dbReference type="NCBI Taxonomy" id="9823"/>
</organismHost>
<evidence type="ECO:0000250" key="1">
    <source>
        <dbReference type="UniProtKB" id="P0CK64"/>
    </source>
</evidence>
<evidence type="ECO:0000250" key="2">
    <source>
        <dbReference type="UniProtKB" id="P0CK68"/>
    </source>
</evidence>
<evidence type="ECO:0000250" key="3">
    <source>
        <dbReference type="UniProtKB" id="P0DJW8"/>
    </source>
</evidence>
<evidence type="ECO:0000250" key="4">
    <source>
        <dbReference type="UniProtKB" id="P0DXO5"/>
    </source>
</evidence>
<evidence type="ECO:0000250" key="5">
    <source>
        <dbReference type="UniProtKB" id="P0DXO6"/>
    </source>
</evidence>
<evidence type="ECO:0000305" key="6"/>
<organism>
    <name type="scientific">Influenza A virus (strain A/Memphis/110/1976 H3N2)</name>
    <dbReference type="NCBI Taxonomy" id="383581"/>
    <lineage>
        <taxon>Viruses</taxon>
        <taxon>Riboviria</taxon>
        <taxon>Orthornavirae</taxon>
        <taxon>Negarnaviricota</taxon>
        <taxon>Polyploviricotina</taxon>
        <taxon>Insthoviricetes</taxon>
        <taxon>Articulavirales</taxon>
        <taxon>Orthomyxoviridae</taxon>
        <taxon>Alphainfluenzavirus</taxon>
        <taxon>Alphainfluenzavirus influenzae</taxon>
        <taxon>Influenza A virus</taxon>
    </lineage>
</organism>